<accession>B5F1G0</accession>
<organism>
    <name type="scientific">Salmonella agona (strain SL483)</name>
    <dbReference type="NCBI Taxonomy" id="454166"/>
    <lineage>
        <taxon>Bacteria</taxon>
        <taxon>Pseudomonadati</taxon>
        <taxon>Pseudomonadota</taxon>
        <taxon>Gammaproteobacteria</taxon>
        <taxon>Enterobacterales</taxon>
        <taxon>Enterobacteriaceae</taxon>
        <taxon>Salmonella</taxon>
    </lineage>
</organism>
<gene>
    <name evidence="1" type="primary">era</name>
    <name type="ordered locus">SeAg_B2742</name>
</gene>
<proteinExistence type="inferred from homology"/>
<evidence type="ECO:0000255" key="1">
    <source>
        <dbReference type="HAMAP-Rule" id="MF_00367"/>
    </source>
</evidence>
<evidence type="ECO:0000255" key="2">
    <source>
        <dbReference type="PROSITE-ProRule" id="PRU01050"/>
    </source>
</evidence>
<feature type="chain" id="PRO_1000121347" description="GTPase Era">
    <location>
        <begin position="1"/>
        <end position="301"/>
    </location>
</feature>
<feature type="domain" description="Era-type G" evidence="2">
    <location>
        <begin position="7"/>
        <end position="175"/>
    </location>
</feature>
<feature type="domain" description="KH type-2" evidence="1">
    <location>
        <begin position="206"/>
        <end position="283"/>
    </location>
</feature>
<feature type="region of interest" description="G1" evidence="2">
    <location>
        <begin position="15"/>
        <end position="22"/>
    </location>
</feature>
<feature type="region of interest" description="G2" evidence="2">
    <location>
        <begin position="41"/>
        <end position="45"/>
    </location>
</feature>
<feature type="region of interest" description="G3" evidence="2">
    <location>
        <begin position="62"/>
        <end position="65"/>
    </location>
</feature>
<feature type="region of interest" description="G4" evidence="2">
    <location>
        <begin position="124"/>
        <end position="127"/>
    </location>
</feature>
<feature type="region of interest" description="G5" evidence="2">
    <location>
        <begin position="154"/>
        <end position="156"/>
    </location>
</feature>
<feature type="binding site" evidence="1">
    <location>
        <begin position="15"/>
        <end position="22"/>
    </location>
    <ligand>
        <name>GTP</name>
        <dbReference type="ChEBI" id="CHEBI:37565"/>
    </ligand>
</feature>
<feature type="binding site" evidence="1">
    <location>
        <begin position="62"/>
        <end position="66"/>
    </location>
    <ligand>
        <name>GTP</name>
        <dbReference type="ChEBI" id="CHEBI:37565"/>
    </ligand>
</feature>
<feature type="binding site" evidence="1">
    <location>
        <begin position="124"/>
        <end position="127"/>
    </location>
    <ligand>
        <name>GTP</name>
        <dbReference type="ChEBI" id="CHEBI:37565"/>
    </ligand>
</feature>
<sequence length="301" mass="33854">MSTDKTYCGFIAIVGRPNVGKSTLLNKLLGQKISITSRKAQTTRHRIVGIHTEGPYQAIYVDTPGLHMEEKRAINRLMNKAASSSIGDVELVIFVVEGTRWTPDDEMVLNKLRDGKAPVILAVNKVDNVQEKADLLPHLQFLASQMNFLDIVPISAETGMNVDTIAGIVRKHLPEAIHHFPEDYITDRSQRFMASEIIREKLMRFLGAELPYSVTVEIERFVTNERGGYDINGLILVEREGQKKMVIGNKGAKIKTIGIEARKDMQEMFEAPVHLELWVKVKSGWADDERALRSLGYVDDL</sequence>
<name>ERA_SALA4</name>
<comment type="function">
    <text evidence="1">An essential GTPase that binds both GDP and GTP, with rapid nucleotide exchange. Plays a role in 16S rRNA processing and 30S ribosomal subunit biogenesis and possibly also in cell cycle regulation and energy metabolism.</text>
</comment>
<comment type="subunit">
    <text evidence="1">Monomer.</text>
</comment>
<comment type="subcellular location">
    <subcellularLocation>
        <location>Cytoplasm</location>
    </subcellularLocation>
    <subcellularLocation>
        <location evidence="1">Cell inner membrane</location>
        <topology evidence="1">Peripheral membrane protein</topology>
    </subcellularLocation>
</comment>
<comment type="similarity">
    <text evidence="1 2">Belongs to the TRAFAC class TrmE-Era-EngA-EngB-Septin-like GTPase superfamily. Era GTPase family.</text>
</comment>
<keyword id="KW-0997">Cell inner membrane</keyword>
<keyword id="KW-1003">Cell membrane</keyword>
<keyword id="KW-0963">Cytoplasm</keyword>
<keyword id="KW-0342">GTP-binding</keyword>
<keyword id="KW-0472">Membrane</keyword>
<keyword id="KW-0547">Nucleotide-binding</keyword>
<keyword id="KW-0690">Ribosome biogenesis</keyword>
<keyword id="KW-0694">RNA-binding</keyword>
<keyword id="KW-0699">rRNA-binding</keyword>
<dbReference type="EMBL" id="CP001138">
    <property type="protein sequence ID" value="ACH49594.1"/>
    <property type="molecule type" value="Genomic_DNA"/>
</dbReference>
<dbReference type="RefSeq" id="WP_000102230.1">
    <property type="nucleotide sequence ID" value="NC_011149.1"/>
</dbReference>
<dbReference type="SMR" id="B5F1G0"/>
<dbReference type="KEGG" id="sea:SeAg_B2742"/>
<dbReference type="HOGENOM" id="CLU_038009_1_2_6"/>
<dbReference type="Proteomes" id="UP000008819">
    <property type="component" value="Chromosome"/>
</dbReference>
<dbReference type="GO" id="GO:0005829">
    <property type="term" value="C:cytosol"/>
    <property type="evidence" value="ECO:0007669"/>
    <property type="project" value="TreeGrafter"/>
</dbReference>
<dbReference type="GO" id="GO:0005886">
    <property type="term" value="C:plasma membrane"/>
    <property type="evidence" value="ECO:0007669"/>
    <property type="project" value="UniProtKB-SubCell"/>
</dbReference>
<dbReference type="GO" id="GO:0005525">
    <property type="term" value="F:GTP binding"/>
    <property type="evidence" value="ECO:0007669"/>
    <property type="project" value="UniProtKB-UniRule"/>
</dbReference>
<dbReference type="GO" id="GO:0003924">
    <property type="term" value="F:GTPase activity"/>
    <property type="evidence" value="ECO:0007669"/>
    <property type="project" value="UniProtKB-UniRule"/>
</dbReference>
<dbReference type="GO" id="GO:0043024">
    <property type="term" value="F:ribosomal small subunit binding"/>
    <property type="evidence" value="ECO:0007669"/>
    <property type="project" value="TreeGrafter"/>
</dbReference>
<dbReference type="GO" id="GO:0070181">
    <property type="term" value="F:small ribosomal subunit rRNA binding"/>
    <property type="evidence" value="ECO:0007669"/>
    <property type="project" value="UniProtKB-UniRule"/>
</dbReference>
<dbReference type="GO" id="GO:0000028">
    <property type="term" value="P:ribosomal small subunit assembly"/>
    <property type="evidence" value="ECO:0007669"/>
    <property type="project" value="TreeGrafter"/>
</dbReference>
<dbReference type="CDD" id="cd04163">
    <property type="entry name" value="Era"/>
    <property type="match status" value="1"/>
</dbReference>
<dbReference type="CDD" id="cd22534">
    <property type="entry name" value="KH-II_Era"/>
    <property type="match status" value="1"/>
</dbReference>
<dbReference type="FunFam" id="3.30.300.20:FF:000003">
    <property type="entry name" value="GTPase Era"/>
    <property type="match status" value="1"/>
</dbReference>
<dbReference type="FunFam" id="3.40.50.300:FF:000094">
    <property type="entry name" value="GTPase Era"/>
    <property type="match status" value="1"/>
</dbReference>
<dbReference type="Gene3D" id="3.30.300.20">
    <property type="match status" value="1"/>
</dbReference>
<dbReference type="Gene3D" id="3.40.50.300">
    <property type="entry name" value="P-loop containing nucleotide triphosphate hydrolases"/>
    <property type="match status" value="1"/>
</dbReference>
<dbReference type="HAMAP" id="MF_00367">
    <property type="entry name" value="GTPase_Era"/>
    <property type="match status" value="1"/>
</dbReference>
<dbReference type="InterPro" id="IPR030388">
    <property type="entry name" value="G_ERA_dom"/>
</dbReference>
<dbReference type="InterPro" id="IPR006073">
    <property type="entry name" value="GTP-bd"/>
</dbReference>
<dbReference type="InterPro" id="IPR005662">
    <property type="entry name" value="GTPase_Era-like"/>
</dbReference>
<dbReference type="InterPro" id="IPR015946">
    <property type="entry name" value="KH_dom-like_a/b"/>
</dbReference>
<dbReference type="InterPro" id="IPR004044">
    <property type="entry name" value="KH_dom_type_2"/>
</dbReference>
<dbReference type="InterPro" id="IPR009019">
    <property type="entry name" value="KH_sf_prok-type"/>
</dbReference>
<dbReference type="InterPro" id="IPR027417">
    <property type="entry name" value="P-loop_NTPase"/>
</dbReference>
<dbReference type="InterPro" id="IPR005225">
    <property type="entry name" value="Small_GTP-bd"/>
</dbReference>
<dbReference type="NCBIfam" id="TIGR00436">
    <property type="entry name" value="era"/>
    <property type="match status" value="1"/>
</dbReference>
<dbReference type="NCBIfam" id="NF000908">
    <property type="entry name" value="PRK00089.1"/>
    <property type="match status" value="1"/>
</dbReference>
<dbReference type="NCBIfam" id="TIGR00231">
    <property type="entry name" value="small_GTP"/>
    <property type="match status" value="1"/>
</dbReference>
<dbReference type="PANTHER" id="PTHR42698">
    <property type="entry name" value="GTPASE ERA"/>
    <property type="match status" value="1"/>
</dbReference>
<dbReference type="PANTHER" id="PTHR42698:SF1">
    <property type="entry name" value="GTPASE ERA, MITOCHONDRIAL"/>
    <property type="match status" value="1"/>
</dbReference>
<dbReference type="Pfam" id="PF07650">
    <property type="entry name" value="KH_2"/>
    <property type="match status" value="1"/>
</dbReference>
<dbReference type="Pfam" id="PF01926">
    <property type="entry name" value="MMR_HSR1"/>
    <property type="match status" value="1"/>
</dbReference>
<dbReference type="SUPFAM" id="SSF52540">
    <property type="entry name" value="P-loop containing nucleoside triphosphate hydrolases"/>
    <property type="match status" value="1"/>
</dbReference>
<dbReference type="SUPFAM" id="SSF54814">
    <property type="entry name" value="Prokaryotic type KH domain (KH-domain type II)"/>
    <property type="match status" value="1"/>
</dbReference>
<dbReference type="PROSITE" id="PS51713">
    <property type="entry name" value="G_ERA"/>
    <property type="match status" value="1"/>
</dbReference>
<dbReference type="PROSITE" id="PS50823">
    <property type="entry name" value="KH_TYPE_2"/>
    <property type="match status" value="1"/>
</dbReference>
<reference key="1">
    <citation type="journal article" date="2011" name="J. Bacteriol.">
        <title>Comparative genomics of 28 Salmonella enterica isolates: evidence for CRISPR-mediated adaptive sublineage evolution.</title>
        <authorList>
            <person name="Fricke W.F."/>
            <person name="Mammel M.K."/>
            <person name="McDermott P.F."/>
            <person name="Tartera C."/>
            <person name="White D.G."/>
            <person name="Leclerc J.E."/>
            <person name="Ravel J."/>
            <person name="Cebula T.A."/>
        </authorList>
    </citation>
    <scope>NUCLEOTIDE SEQUENCE [LARGE SCALE GENOMIC DNA]</scope>
    <source>
        <strain>SL483</strain>
    </source>
</reference>
<protein>
    <recommendedName>
        <fullName evidence="1">GTPase Era</fullName>
    </recommendedName>
</protein>